<evidence type="ECO:0000255" key="1">
    <source>
        <dbReference type="HAMAP-Rule" id="MF_01824"/>
    </source>
</evidence>
<comment type="function">
    <text evidence="1">Catalyzes the formation of pyridoxal 5'-phosphate from ribose 5-phosphate (RBP), glyceraldehyde 3-phosphate (G3P) and ammonia. The ammonia is provided by the PdxT subunit. Can also use ribulose 5-phosphate and dihydroxyacetone phosphate as substrates, resulting from enzyme-catalyzed isomerization of RBP and G3P, respectively.</text>
</comment>
<comment type="catalytic activity">
    <reaction evidence="1">
        <text>aldehydo-D-ribose 5-phosphate + D-glyceraldehyde 3-phosphate + L-glutamine = pyridoxal 5'-phosphate + L-glutamate + phosphate + 3 H2O + H(+)</text>
        <dbReference type="Rhea" id="RHEA:31507"/>
        <dbReference type="ChEBI" id="CHEBI:15377"/>
        <dbReference type="ChEBI" id="CHEBI:15378"/>
        <dbReference type="ChEBI" id="CHEBI:29985"/>
        <dbReference type="ChEBI" id="CHEBI:43474"/>
        <dbReference type="ChEBI" id="CHEBI:58273"/>
        <dbReference type="ChEBI" id="CHEBI:58359"/>
        <dbReference type="ChEBI" id="CHEBI:59776"/>
        <dbReference type="ChEBI" id="CHEBI:597326"/>
        <dbReference type="EC" id="4.3.3.6"/>
    </reaction>
</comment>
<comment type="pathway">
    <text evidence="1">Cofactor biosynthesis; pyridoxal 5'-phosphate biosynthesis.</text>
</comment>
<comment type="subunit">
    <text evidence="1">In the presence of PdxT, forms a dodecamer of heterodimers.</text>
</comment>
<comment type="similarity">
    <text evidence="1">Belongs to the PdxS/SNZ family.</text>
</comment>
<reference key="1">
    <citation type="journal article" date="2009" name="Proc. Natl. Acad. Sci. U.S.A.">
        <title>Biogeography of the Sulfolobus islandicus pan-genome.</title>
        <authorList>
            <person name="Reno M.L."/>
            <person name="Held N.L."/>
            <person name="Fields C.J."/>
            <person name="Burke P.V."/>
            <person name="Whitaker R.J."/>
        </authorList>
    </citation>
    <scope>NUCLEOTIDE SEQUENCE [LARGE SCALE GENOMIC DNA]</scope>
    <source>
        <strain>L.S.2.15 / Lassen #1</strain>
    </source>
</reference>
<name>PDXS_SACI2</name>
<protein>
    <recommendedName>
        <fullName evidence="1">Pyridoxal 5'-phosphate synthase subunit PdxS</fullName>
        <shortName evidence="1">PLP synthase subunit PdxS</shortName>
        <ecNumber evidence="1">4.3.3.6</ecNumber>
    </recommendedName>
    <alternativeName>
        <fullName evidence="1">Pdx1</fullName>
    </alternativeName>
</protein>
<organism>
    <name type="scientific">Saccharolobus islandicus (strain L.S.2.15 / Lassen #1)</name>
    <name type="common">Sulfolobus islandicus</name>
    <dbReference type="NCBI Taxonomy" id="429572"/>
    <lineage>
        <taxon>Archaea</taxon>
        <taxon>Thermoproteota</taxon>
        <taxon>Thermoprotei</taxon>
        <taxon>Sulfolobales</taxon>
        <taxon>Sulfolobaceae</taxon>
        <taxon>Saccharolobus</taxon>
    </lineage>
</organism>
<gene>
    <name evidence="1" type="primary">pdxS</name>
    <name type="ordered locus">LS215_1667</name>
</gene>
<dbReference type="EC" id="4.3.3.6" evidence="1"/>
<dbReference type="EMBL" id="CP001399">
    <property type="protein sequence ID" value="ACP35671.1"/>
    <property type="molecule type" value="Genomic_DNA"/>
</dbReference>
<dbReference type="RefSeq" id="WP_012711553.1">
    <property type="nucleotide sequence ID" value="NC_012589.1"/>
</dbReference>
<dbReference type="SMR" id="C3MQK8"/>
<dbReference type="GeneID" id="84061870"/>
<dbReference type="KEGG" id="sis:LS215_1667"/>
<dbReference type="HOGENOM" id="CLU_055352_1_0_2"/>
<dbReference type="OrthoDB" id="6840at2157"/>
<dbReference type="UniPathway" id="UPA00245"/>
<dbReference type="Proteomes" id="UP000001747">
    <property type="component" value="Chromosome"/>
</dbReference>
<dbReference type="GO" id="GO:0036381">
    <property type="term" value="F:pyridoxal 5'-phosphate synthase (glutamine hydrolysing) activity"/>
    <property type="evidence" value="ECO:0007669"/>
    <property type="project" value="UniProtKB-UniRule"/>
</dbReference>
<dbReference type="GO" id="GO:0006520">
    <property type="term" value="P:amino acid metabolic process"/>
    <property type="evidence" value="ECO:0007669"/>
    <property type="project" value="TreeGrafter"/>
</dbReference>
<dbReference type="GO" id="GO:0042823">
    <property type="term" value="P:pyridoxal phosphate biosynthetic process"/>
    <property type="evidence" value="ECO:0007669"/>
    <property type="project" value="UniProtKB-UniRule"/>
</dbReference>
<dbReference type="GO" id="GO:0008615">
    <property type="term" value="P:pyridoxine biosynthetic process"/>
    <property type="evidence" value="ECO:0007669"/>
    <property type="project" value="TreeGrafter"/>
</dbReference>
<dbReference type="CDD" id="cd04727">
    <property type="entry name" value="pdxS"/>
    <property type="match status" value="1"/>
</dbReference>
<dbReference type="FunFam" id="3.20.20.70:FF:000001">
    <property type="entry name" value="Pyridoxine biosynthesis protein PDX1"/>
    <property type="match status" value="1"/>
</dbReference>
<dbReference type="Gene3D" id="3.20.20.70">
    <property type="entry name" value="Aldolase class I"/>
    <property type="match status" value="1"/>
</dbReference>
<dbReference type="HAMAP" id="MF_01824">
    <property type="entry name" value="PdxS"/>
    <property type="match status" value="1"/>
</dbReference>
<dbReference type="InterPro" id="IPR013785">
    <property type="entry name" value="Aldolase_TIM"/>
</dbReference>
<dbReference type="InterPro" id="IPR001852">
    <property type="entry name" value="PdxS/SNZ"/>
</dbReference>
<dbReference type="InterPro" id="IPR033755">
    <property type="entry name" value="PdxS/SNZ_N"/>
</dbReference>
<dbReference type="InterPro" id="IPR011060">
    <property type="entry name" value="RibuloseP-bd_barrel"/>
</dbReference>
<dbReference type="NCBIfam" id="NF003215">
    <property type="entry name" value="PRK04180.1"/>
    <property type="match status" value="1"/>
</dbReference>
<dbReference type="PANTHER" id="PTHR31829">
    <property type="entry name" value="PYRIDOXAL 5'-PHOSPHATE SYNTHASE SUBUNIT SNZ1-RELATED"/>
    <property type="match status" value="1"/>
</dbReference>
<dbReference type="PANTHER" id="PTHR31829:SF0">
    <property type="entry name" value="PYRIDOXAL 5'-PHOSPHATE SYNTHASE SUBUNIT SNZ1-RELATED"/>
    <property type="match status" value="1"/>
</dbReference>
<dbReference type="Pfam" id="PF01680">
    <property type="entry name" value="SOR_SNZ"/>
    <property type="match status" value="1"/>
</dbReference>
<dbReference type="PIRSF" id="PIRSF029271">
    <property type="entry name" value="Pdx1"/>
    <property type="match status" value="1"/>
</dbReference>
<dbReference type="SUPFAM" id="SSF51366">
    <property type="entry name" value="Ribulose-phoshate binding barrel"/>
    <property type="match status" value="1"/>
</dbReference>
<dbReference type="PROSITE" id="PS01235">
    <property type="entry name" value="PDXS_SNZ_1"/>
    <property type="match status" value="1"/>
</dbReference>
<dbReference type="PROSITE" id="PS51129">
    <property type="entry name" value="PDXS_SNZ_2"/>
    <property type="match status" value="1"/>
</dbReference>
<feature type="chain" id="PRO_1000216063" description="Pyridoxal 5'-phosphate synthase subunit PdxS">
    <location>
        <begin position="1"/>
        <end position="338"/>
    </location>
</feature>
<feature type="active site" description="Schiff-base intermediate with D-ribose 5-phosphate" evidence="1">
    <location>
        <position position="123"/>
    </location>
</feature>
<feature type="binding site" evidence="1">
    <location>
        <position position="66"/>
    </location>
    <ligand>
        <name>D-ribose 5-phosphate</name>
        <dbReference type="ChEBI" id="CHEBI:78346"/>
    </ligand>
</feature>
<feature type="binding site" evidence="1">
    <location>
        <position position="195"/>
    </location>
    <ligand>
        <name>D-ribose 5-phosphate</name>
        <dbReference type="ChEBI" id="CHEBI:78346"/>
    </ligand>
</feature>
<feature type="binding site" evidence="1">
    <location>
        <position position="207"/>
    </location>
    <ligand>
        <name>D-glyceraldehyde 3-phosphate</name>
        <dbReference type="ChEBI" id="CHEBI:59776"/>
    </ligand>
</feature>
<feature type="binding site" evidence="1">
    <location>
        <position position="256"/>
    </location>
    <ligand>
        <name>D-ribose 5-phosphate</name>
        <dbReference type="ChEBI" id="CHEBI:78346"/>
    </ligand>
</feature>
<feature type="binding site" evidence="1">
    <location>
        <begin position="277"/>
        <end position="278"/>
    </location>
    <ligand>
        <name>D-ribose 5-phosphate</name>
        <dbReference type="ChEBI" id="CHEBI:78346"/>
    </ligand>
</feature>
<sequence length="338" mass="37373">MRLYELSFAQIEDFFYKLAEVKDIIKDSGLMEFLPELKKLDSTIQTGTTRVKHAFPIFQKGGVVMDITNVQQAQIAEEAGAVAVMVLDKLPYDVRKSGGVARMADPKIIGEVMNSITIPVMAKVRIGHYYEAKLLEALGVDMIDESEVLTPADEEHHINKWEFSVPFVNGARNLGEALRRTAEGASMIRTKGEAGTGNVSEAVKHMKIINSEIRSLISMSEEDRVKKAREYQVPYQLVELTAKIKRLPIVNFAAGGIATPADAALMMWLGADGLFVGSGIFKSQDPDERAKAVVLAAACWEYPEIVLEAQKMISEQKSMMGIDIKSLKPEELLQVRGL</sequence>
<keyword id="KW-0456">Lyase</keyword>
<keyword id="KW-0663">Pyridoxal phosphate</keyword>
<keyword id="KW-0704">Schiff base</keyword>
<accession>C3MQK8</accession>
<proteinExistence type="inferred from homology"/>